<feature type="chain" id="PRO_1000099328" description="Bis(5'-nucleosyl)-tetraphosphatase, symmetrical">
    <location>
        <begin position="1"/>
        <end position="273"/>
    </location>
</feature>
<evidence type="ECO:0000255" key="1">
    <source>
        <dbReference type="HAMAP-Rule" id="MF_00199"/>
    </source>
</evidence>
<organism>
    <name type="scientific">Proteus mirabilis (strain HI4320)</name>
    <dbReference type="NCBI Taxonomy" id="529507"/>
    <lineage>
        <taxon>Bacteria</taxon>
        <taxon>Pseudomonadati</taxon>
        <taxon>Pseudomonadota</taxon>
        <taxon>Gammaproteobacteria</taxon>
        <taxon>Enterobacterales</taxon>
        <taxon>Morganellaceae</taxon>
        <taxon>Proteus</taxon>
    </lineage>
</organism>
<proteinExistence type="inferred from homology"/>
<accession>B4F2I4</accession>
<name>APAH_PROMH</name>
<keyword id="KW-0378">Hydrolase</keyword>
<keyword id="KW-1185">Reference proteome</keyword>
<gene>
    <name evidence="1" type="primary">apaH</name>
    <name type="ordered locus">PMI2336</name>
</gene>
<comment type="function">
    <text evidence="1">Hydrolyzes diadenosine 5',5'''-P1,P4-tetraphosphate to yield ADP.</text>
</comment>
<comment type="catalytic activity">
    <reaction evidence="1">
        <text>P(1),P(4)-bis(5'-adenosyl) tetraphosphate + H2O = 2 ADP + 2 H(+)</text>
        <dbReference type="Rhea" id="RHEA:24252"/>
        <dbReference type="ChEBI" id="CHEBI:15377"/>
        <dbReference type="ChEBI" id="CHEBI:15378"/>
        <dbReference type="ChEBI" id="CHEBI:58141"/>
        <dbReference type="ChEBI" id="CHEBI:456216"/>
        <dbReference type="EC" id="3.6.1.41"/>
    </reaction>
</comment>
<comment type="similarity">
    <text evidence="1">Belongs to the Ap4A hydrolase family.</text>
</comment>
<protein>
    <recommendedName>
        <fullName evidence="1">Bis(5'-nucleosyl)-tetraphosphatase, symmetrical</fullName>
        <ecNumber evidence="1">3.6.1.41</ecNumber>
    </recommendedName>
    <alternativeName>
        <fullName evidence="1">Ap4A hydrolase</fullName>
    </alternativeName>
    <alternativeName>
        <fullName evidence="1">Diadenosine 5',5'''-P1,P4-tetraphosphate pyrophosphohydrolase</fullName>
    </alternativeName>
    <alternativeName>
        <fullName evidence="1">Diadenosine tetraphosphatase</fullName>
    </alternativeName>
</protein>
<sequence length="273" mass="30986">MATYLIGDVHGCYRELRQLLNQVNFDANQDTLWLTGDLVARGPDSLEVLRFVKSLGSALKLVLGNHDLHLLGVFAKISRNKPKDKLNELLNAPDADELINWLRRQPLLQVDEEKKIVMAHAGITPQWDLATAKKCAREVEAILSSDSYPLFINSMYGDMPNNWSPELTGLPRLRFSTNAFTRMRYCFPNGQLDMICKDKPENAPAPLKPWFDLPNQLPNDYSIIFGHWASLEGKGTPENIYALDTGCCWGGVLTCLRWEDKRYFIQPSLTHLP</sequence>
<dbReference type="EC" id="3.6.1.41" evidence="1"/>
<dbReference type="EMBL" id="AM942759">
    <property type="protein sequence ID" value="CAR44621.1"/>
    <property type="molecule type" value="Genomic_DNA"/>
</dbReference>
<dbReference type="RefSeq" id="WP_004245544.1">
    <property type="nucleotide sequence ID" value="NC_010554.1"/>
</dbReference>
<dbReference type="SMR" id="B4F2I4"/>
<dbReference type="EnsemblBacteria" id="CAR44621">
    <property type="protein sequence ID" value="CAR44621"/>
    <property type="gene ID" value="PMI2336"/>
</dbReference>
<dbReference type="GeneID" id="6800270"/>
<dbReference type="KEGG" id="pmr:PMI2336"/>
<dbReference type="eggNOG" id="COG0639">
    <property type="taxonomic scope" value="Bacteria"/>
</dbReference>
<dbReference type="HOGENOM" id="CLU_056184_2_0_6"/>
<dbReference type="Proteomes" id="UP000008319">
    <property type="component" value="Chromosome"/>
</dbReference>
<dbReference type="GO" id="GO:0008803">
    <property type="term" value="F:bis(5'-nucleosyl)-tetraphosphatase (symmetrical) activity"/>
    <property type="evidence" value="ECO:0007669"/>
    <property type="project" value="UniProtKB-UniRule"/>
</dbReference>
<dbReference type="CDD" id="cd07422">
    <property type="entry name" value="MPP_ApaH"/>
    <property type="match status" value="1"/>
</dbReference>
<dbReference type="FunFam" id="3.60.21.10:FF:000013">
    <property type="entry name" value="Bis(5'-nucleosyl)-tetraphosphatase, symmetrical"/>
    <property type="match status" value="1"/>
</dbReference>
<dbReference type="Gene3D" id="3.60.21.10">
    <property type="match status" value="1"/>
</dbReference>
<dbReference type="HAMAP" id="MF_00199">
    <property type="entry name" value="ApaH"/>
    <property type="match status" value="1"/>
</dbReference>
<dbReference type="InterPro" id="IPR004617">
    <property type="entry name" value="ApaH"/>
</dbReference>
<dbReference type="InterPro" id="IPR004843">
    <property type="entry name" value="Calcineurin-like_PHP_ApaH"/>
</dbReference>
<dbReference type="InterPro" id="IPR029052">
    <property type="entry name" value="Metallo-depent_PP-like"/>
</dbReference>
<dbReference type="NCBIfam" id="TIGR00668">
    <property type="entry name" value="apaH"/>
    <property type="match status" value="1"/>
</dbReference>
<dbReference type="NCBIfam" id="NF001204">
    <property type="entry name" value="PRK00166.1"/>
    <property type="match status" value="1"/>
</dbReference>
<dbReference type="PANTHER" id="PTHR40942">
    <property type="match status" value="1"/>
</dbReference>
<dbReference type="PANTHER" id="PTHR40942:SF4">
    <property type="entry name" value="CYTOCHROME C5"/>
    <property type="match status" value="1"/>
</dbReference>
<dbReference type="Pfam" id="PF00149">
    <property type="entry name" value="Metallophos"/>
    <property type="match status" value="1"/>
</dbReference>
<dbReference type="PIRSF" id="PIRSF000903">
    <property type="entry name" value="B5n-ttraPtase_sm"/>
    <property type="match status" value="1"/>
</dbReference>
<dbReference type="SUPFAM" id="SSF56300">
    <property type="entry name" value="Metallo-dependent phosphatases"/>
    <property type="match status" value="1"/>
</dbReference>
<reference key="1">
    <citation type="journal article" date="2008" name="J. Bacteriol.">
        <title>Complete genome sequence of uropathogenic Proteus mirabilis, a master of both adherence and motility.</title>
        <authorList>
            <person name="Pearson M.M."/>
            <person name="Sebaihia M."/>
            <person name="Churcher C."/>
            <person name="Quail M.A."/>
            <person name="Seshasayee A.S."/>
            <person name="Luscombe N.M."/>
            <person name="Abdellah Z."/>
            <person name="Arrosmith C."/>
            <person name="Atkin B."/>
            <person name="Chillingworth T."/>
            <person name="Hauser H."/>
            <person name="Jagels K."/>
            <person name="Moule S."/>
            <person name="Mungall K."/>
            <person name="Norbertczak H."/>
            <person name="Rabbinowitsch E."/>
            <person name="Walker D."/>
            <person name="Whithead S."/>
            <person name="Thomson N.R."/>
            <person name="Rather P.N."/>
            <person name="Parkhill J."/>
            <person name="Mobley H.L.T."/>
        </authorList>
    </citation>
    <scope>NUCLEOTIDE SEQUENCE [LARGE SCALE GENOMIC DNA]</scope>
    <source>
        <strain>HI4320</strain>
    </source>
</reference>